<reference evidence="5" key="1">
    <citation type="journal article" date="2012" name="Syst. Biol.">
        <title>Peptidomics-based phylogeny and biogeography of Mantophasmatodea (Hexapoda).</title>
        <authorList>
            <person name="Predel R."/>
            <person name="Neupert S."/>
            <person name="Huetteroth W."/>
            <person name="Kahnt J."/>
            <person name="Waidelich D."/>
            <person name="Roth S."/>
        </authorList>
    </citation>
    <scope>PROTEIN SEQUENCE</scope>
    <scope>AMIDATION AT LEU-8</scope>
    <source>
        <tissue evidence="3">Corpora cardiaca</tissue>
    </source>
</reference>
<sequence length="8" mass="884">SPPFAPRL</sequence>
<dbReference type="GO" id="GO:0005576">
    <property type="term" value="C:extracellular region"/>
    <property type="evidence" value="ECO:0007669"/>
    <property type="project" value="UniProtKB-SubCell"/>
</dbReference>
<dbReference type="GO" id="GO:0007218">
    <property type="term" value="P:neuropeptide signaling pathway"/>
    <property type="evidence" value="ECO:0007669"/>
    <property type="project" value="UniProtKB-KW"/>
</dbReference>
<accession>B0M2U3</accession>
<keyword id="KW-0027">Amidation</keyword>
<keyword id="KW-0903">Direct protein sequencing</keyword>
<keyword id="KW-0527">Neuropeptide</keyword>
<keyword id="KW-0964">Secreted</keyword>
<organism>
    <name type="scientific">Namaquaphasma ookiepense</name>
    <name type="common">Gladiator bug</name>
    <dbReference type="NCBI Taxonomy" id="409167"/>
    <lineage>
        <taxon>Eukaryota</taxon>
        <taxon>Metazoa</taxon>
        <taxon>Ecdysozoa</taxon>
        <taxon>Arthropoda</taxon>
        <taxon>Hexapoda</taxon>
        <taxon>Insecta</taxon>
        <taxon>Pterygota</taxon>
        <taxon>Neoptera</taxon>
        <taxon>Polyneoptera</taxon>
        <taxon>Mantophasmatodea</taxon>
        <taxon>Austrophasmatidae</taxon>
        <taxon>Namaquaphasma</taxon>
    </lineage>
</organism>
<feature type="peptide" id="PRO_0000420508" description="Pyrokinin-2" evidence="3">
    <location>
        <begin position="1"/>
        <end position="8"/>
    </location>
</feature>
<feature type="modified residue" description="Leucine amide" evidence="3">
    <location>
        <position position="8"/>
    </location>
</feature>
<proteinExistence type="evidence at protein level"/>
<name>PPK2_NAMOO</name>
<protein>
    <recommendedName>
        <fullName evidence="4">Pyrokinin-2</fullName>
        <shortName evidence="4">PK-2</shortName>
    </recommendedName>
    <alternativeName>
        <fullName evidence="1">FXPRL-amide</fullName>
    </alternativeName>
</protein>
<evidence type="ECO:0000250" key="1">
    <source>
        <dbReference type="UniProtKB" id="P82619"/>
    </source>
</evidence>
<evidence type="ECO:0000255" key="2"/>
<evidence type="ECO:0000269" key="3">
    <source>
    </source>
</evidence>
<evidence type="ECO:0000303" key="4">
    <source>
    </source>
</evidence>
<evidence type="ECO:0000305" key="5"/>
<evidence type="ECO:0000305" key="6">
    <source>
    </source>
</evidence>
<comment type="function">
    <text evidence="1">Myoactive.</text>
</comment>
<comment type="subcellular location">
    <subcellularLocation>
        <location evidence="6">Secreted</location>
    </subcellularLocation>
</comment>
<comment type="similarity">
    <text evidence="2">Belongs to the pyrokinin family.</text>
</comment>